<proteinExistence type="inferred from homology"/>
<name>CBID_CLOBM</name>
<sequence length="359" mass="39444">MLDLYVNCDGKKLRCGYTTGSCAAAAAKAAAITLFYNKKLKEINIDTPKGIELTIPIEKIVEDESFVECAVIKDGGDDVDITHGIEIWARAEKKSSGYTLKGGKGVGVVCGEGLYVPKGEPAINPVPRYMIEKEVRSVIPKDSGVEITIFVPKGEEIAKKTFNPRLNIIGGISILGTTGIVMPMSEDALKASIELEINQKTCHGEKELILLFGNMGEKMAKELNLKENNMVIMSNYVGFALNCSMARKLQKITIVGHIGKISKIASGCFNTHSRVCDTRLETLALELALMGYDKDLVTKIYNQKTTEGAVNLLGEGYEKLYKNLGEKIIRKIEQYTYDSIKADIVMYSMEKGILYSSIE</sequence>
<comment type="function">
    <text evidence="1">Catalyzes the methylation of C-1 in cobalt-precorrin-5B to form cobalt-precorrin-6A.</text>
</comment>
<comment type="catalytic activity">
    <reaction evidence="1">
        <text>Co-precorrin-5B + S-adenosyl-L-methionine = Co-precorrin-6A + S-adenosyl-L-homocysteine</text>
        <dbReference type="Rhea" id="RHEA:26285"/>
        <dbReference type="ChEBI" id="CHEBI:57856"/>
        <dbReference type="ChEBI" id="CHEBI:59789"/>
        <dbReference type="ChEBI" id="CHEBI:60063"/>
        <dbReference type="ChEBI" id="CHEBI:60064"/>
        <dbReference type="EC" id="2.1.1.195"/>
    </reaction>
</comment>
<comment type="pathway">
    <text evidence="1">Cofactor biosynthesis; adenosylcobalamin biosynthesis; cob(II)yrinate a,c-diamide from sirohydrochlorin (anaerobic route): step 6/10.</text>
</comment>
<comment type="similarity">
    <text evidence="1">Belongs to the CbiD family.</text>
</comment>
<evidence type="ECO:0000255" key="1">
    <source>
        <dbReference type="HAMAP-Rule" id="MF_00787"/>
    </source>
</evidence>
<feature type="chain" id="PRO_1000133736" description="Cobalt-precorrin-5B C(1)-methyltransferase">
    <location>
        <begin position="1"/>
        <end position="359"/>
    </location>
</feature>
<organism>
    <name type="scientific">Clostridium botulinum (strain Loch Maree / Type A3)</name>
    <dbReference type="NCBI Taxonomy" id="498214"/>
    <lineage>
        <taxon>Bacteria</taxon>
        <taxon>Bacillati</taxon>
        <taxon>Bacillota</taxon>
        <taxon>Clostridia</taxon>
        <taxon>Eubacteriales</taxon>
        <taxon>Clostridiaceae</taxon>
        <taxon>Clostridium</taxon>
    </lineage>
</organism>
<protein>
    <recommendedName>
        <fullName evidence="1">Cobalt-precorrin-5B C(1)-methyltransferase</fullName>
        <ecNumber evidence="1">2.1.1.195</ecNumber>
    </recommendedName>
    <alternativeName>
        <fullName evidence="1">Cobalt-precorrin-6A synthase</fullName>
    </alternativeName>
</protein>
<dbReference type="EC" id="2.1.1.195" evidence="1"/>
<dbReference type="EMBL" id="CP000962">
    <property type="protein sequence ID" value="ACA55102.1"/>
    <property type="molecule type" value="Genomic_DNA"/>
</dbReference>
<dbReference type="RefSeq" id="WP_012343126.1">
    <property type="nucleotide sequence ID" value="NC_010520.1"/>
</dbReference>
<dbReference type="SMR" id="B1KY30"/>
<dbReference type="KEGG" id="cbl:CLK_0373"/>
<dbReference type="HOGENOM" id="CLU_041273_1_0_9"/>
<dbReference type="UniPathway" id="UPA00148">
    <property type="reaction ID" value="UER00227"/>
</dbReference>
<dbReference type="GO" id="GO:0043780">
    <property type="term" value="F:cobalt-precorrin-5B C1-methyltransferase activity"/>
    <property type="evidence" value="ECO:0007669"/>
    <property type="project" value="RHEA"/>
</dbReference>
<dbReference type="GO" id="GO:0019251">
    <property type="term" value="P:anaerobic cobalamin biosynthetic process"/>
    <property type="evidence" value="ECO:0007669"/>
    <property type="project" value="UniProtKB-UniRule"/>
</dbReference>
<dbReference type="GO" id="GO:0032259">
    <property type="term" value="P:methylation"/>
    <property type="evidence" value="ECO:0007669"/>
    <property type="project" value="UniProtKB-KW"/>
</dbReference>
<dbReference type="Gene3D" id="3.30.2110.10">
    <property type="entry name" value="CbiD-like"/>
    <property type="match status" value="1"/>
</dbReference>
<dbReference type="HAMAP" id="MF_00787">
    <property type="entry name" value="CbiD"/>
    <property type="match status" value="1"/>
</dbReference>
<dbReference type="InterPro" id="IPR002748">
    <property type="entry name" value="CbiD"/>
</dbReference>
<dbReference type="InterPro" id="IPR036074">
    <property type="entry name" value="CbiD_sf"/>
</dbReference>
<dbReference type="NCBIfam" id="TIGR00312">
    <property type="entry name" value="cbiD"/>
    <property type="match status" value="1"/>
</dbReference>
<dbReference type="PANTHER" id="PTHR35863">
    <property type="entry name" value="COBALT-PRECORRIN-5B C(1)-METHYLTRANSFERASE"/>
    <property type="match status" value="1"/>
</dbReference>
<dbReference type="PANTHER" id="PTHR35863:SF1">
    <property type="entry name" value="COBALT-PRECORRIN-5B C(1)-METHYLTRANSFERASE"/>
    <property type="match status" value="1"/>
</dbReference>
<dbReference type="Pfam" id="PF01888">
    <property type="entry name" value="CbiD"/>
    <property type="match status" value="1"/>
</dbReference>
<dbReference type="PIRSF" id="PIRSF026782">
    <property type="entry name" value="CbiD"/>
    <property type="match status" value="1"/>
</dbReference>
<dbReference type="SUPFAM" id="SSF111342">
    <property type="entry name" value="CbiD-like"/>
    <property type="match status" value="1"/>
</dbReference>
<keyword id="KW-0169">Cobalamin biosynthesis</keyword>
<keyword id="KW-0489">Methyltransferase</keyword>
<keyword id="KW-0949">S-adenosyl-L-methionine</keyword>
<keyword id="KW-0808">Transferase</keyword>
<gene>
    <name evidence="1" type="primary">cbiD</name>
    <name type="ordered locus">CLK_0373</name>
</gene>
<accession>B1KY30</accession>
<reference key="1">
    <citation type="journal article" date="2007" name="PLoS ONE">
        <title>Analysis of the neurotoxin complex genes in Clostridium botulinum A1-A4 and B1 strains: BoNT/A3, /Ba4 and /B1 clusters are located within plasmids.</title>
        <authorList>
            <person name="Smith T.J."/>
            <person name="Hill K.K."/>
            <person name="Foley B.T."/>
            <person name="Detter J.C."/>
            <person name="Munk A.C."/>
            <person name="Bruce D.C."/>
            <person name="Doggett N.A."/>
            <person name="Smith L.A."/>
            <person name="Marks J.D."/>
            <person name="Xie G."/>
            <person name="Brettin T.S."/>
        </authorList>
    </citation>
    <scope>NUCLEOTIDE SEQUENCE [LARGE SCALE GENOMIC DNA]</scope>
    <source>
        <strain>Loch Maree / Type A3</strain>
    </source>
</reference>